<name>NANE_STAAT</name>
<comment type="function">
    <text evidence="1">Converts N-acetylmannosamine-6-phosphate (ManNAc-6-P) to N-acetylglucosamine-6-phosphate (GlcNAc-6-P).</text>
</comment>
<comment type="catalytic activity">
    <reaction evidence="1">
        <text>an N-acyl-D-glucosamine 6-phosphate = an N-acyl-D-mannosamine 6-phosphate</text>
        <dbReference type="Rhea" id="RHEA:23932"/>
        <dbReference type="ChEBI" id="CHEBI:57599"/>
        <dbReference type="ChEBI" id="CHEBI:57666"/>
        <dbReference type="EC" id="5.1.3.9"/>
    </reaction>
</comment>
<comment type="pathway">
    <text evidence="1">Amino-sugar metabolism; N-acetylneuraminate degradation; D-fructose 6-phosphate from N-acetylneuraminate: step 3/5.</text>
</comment>
<comment type="similarity">
    <text evidence="1">Belongs to the NanE family.</text>
</comment>
<evidence type="ECO:0000255" key="1">
    <source>
        <dbReference type="HAMAP-Rule" id="MF_01235"/>
    </source>
</evidence>
<dbReference type="EC" id="5.1.3.9" evidence="1"/>
<dbReference type="EMBL" id="CP000730">
    <property type="protein sequence ID" value="ABX28368.1"/>
    <property type="molecule type" value="Genomic_DNA"/>
</dbReference>
<dbReference type="RefSeq" id="WP_000936720.1">
    <property type="nucleotide sequence ID" value="NC_010079.1"/>
</dbReference>
<dbReference type="SMR" id="A8YZE2"/>
<dbReference type="KEGG" id="sax:USA300HOU_0338"/>
<dbReference type="HOGENOM" id="CLU_086300_1_0_9"/>
<dbReference type="BRENDA" id="5.1.3.9">
    <property type="organism ID" value="3352"/>
</dbReference>
<dbReference type="UniPathway" id="UPA00629">
    <property type="reaction ID" value="UER00682"/>
</dbReference>
<dbReference type="GO" id="GO:0005829">
    <property type="term" value="C:cytosol"/>
    <property type="evidence" value="ECO:0007669"/>
    <property type="project" value="TreeGrafter"/>
</dbReference>
<dbReference type="GO" id="GO:0047465">
    <property type="term" value="F:N-acylglucosamine-6-phosphate 2-epimerase activity"/>
    <property type="evidence" value="ECO:0007669"/>
    <property type="project" value="UniProtKB-EC"/>
</dbReference>
<dbReference type="GO" id="GO:0005975">
    <property type="term" value="P:carbohydrate metabolic process"/>
    <property type="evidence" value="ECO:0007669"/>
    <property type="project" value="UniProtKB-UniRule"/>
</dbReference>
<dbReference type="GO" id="GO:0006053">
    <property type="term" value="P:N-acetylmannosamine catabolic process"/>
    <property type="evidence" value="ECO:0007669"/>
    <property type="project" value="TreeGrafter"/>
</dbReference>
<dbReference type="GO" id="GO:0019262">
    <property type="term" value="P:N-acetylneuraminate catabolic process"/>
    <property type="evidence" value="ECO:0007669"/>
    <property type="project" value="UniProtKB-UniRule"/>
</dbReference>
<dbReference type="CDD" id="cd04729">
    <property type="entry name" value="NanE"/>
    <property type="match status" value="1"/>
</dbReference>
<dbReference type="FunFam" id="3.20.20.70:FF:000035">
    <property type="entry name" value="Putative N-acetylmannosamine-6-phosphate 2-epimerase"/>
    <property type="match status" value="1"/>
</dbReference>
<dbReference type="Gene3D" id="3.20.20.70">
    <property type="entry name" value="Aldolase class I"/>
    <property type="match status" value="1"/>
</dbReference>
<dbReference type="HAMAP" id="MF_01235">
    <property type="entry name" value="ManNAc6P_epimer"/>
    <property type="match status" value="1"/>
</dbReference>
<dbReference type="InterPro" id="IPR013785">
    <property type="entry name" value="Aldolase_TIM"/>
</dbReference>
<dbReference type="InterPro" id="IPR007260">
    <property type="entry name" value="NanE"/>
</dbReference>
<dbReference type="InterPro" id="IPR011060">
    <property type="entry name" value="RibuloseP-bd_barrel"/>
</dbReference>
<dbReference type="NCBIfam" id="NF002231">
    <property type="entry name" value="PRK01130.1"/>
    <property type="match status" value="1"/>
</dbReference>
<dbReference type="PANTHER" id="PTHR36204">
    <property type="entry name" value="N-ACETYLMANNOSAMINE-6-PHOSPHATE 2-EPIMERASE-RELATED"/>
    <property type="match status" value="1"/>
</dbReference>
<dbReference type="PANTHER" id="PTHR36204:SF1">
    <property type="entry name" value="N-ACETYLMANNOSAMINE-6-PHOSPHATE 2-EPIMERASE-RELATED"/>
    <property type="match status" value="1"/>
</dbReference>
<dbReference type="Pfam" id="PF04131">
    <property type="entry name" value="NanE"/>
    <property type="match status" value="1"/>
</dbReference>
<dbReference type="SUPFAM" id="SSF51366">
    <property type="entry name" value="Ribulose-phoshate binding barrel"/>
    <property type="match status" value="1"/>
</dbReference>
<proteinExistence type="inferred from homology"/>
<accession>A8YZE2</accession>
<organism>
    <name type="scientific">Staphylococcus aureus (strain USA300 / TCH1516)</name>
    <dbReference type="NCBI Taxonomy" id="451516"/>
    <lineage>
        <taxon>Bacteria</taxon>
        <taxon>Bacillati</taxon>
        <taxon>Bacillota</taxon>
        <taxon>Bacilli</taxon>
        <taxon>Bacillales</taxon>
        <taxon>Staphylococcaceae</taxon>
        <taxon>Staphylococcus</taxon>
    </lineage>
</organism>
<keyword id="KW-0119">Carbohydrate metabolism</keyword>
<keyword id="KW-0413">Isomerase</keyword>
<feature type="chain" id="PRO_1000085732" description="Putative N-acetylmannosamine-6-phosphate 2-epimerase">
    <location>
        <begin position="1"/>
        <end position="222"/>
    </location>
</feature>
<reference key="1">
    <citation type="journal article" date="2007" name="BMC Microbiol.">
        <title>Subtle genetic changes enhance virulence of methicillin resistant and sensitive Staphylococcus aureus.</title>
        <authorList>
            <person name="Highlander S.K."/>
            <person name="Hulten K.G."/>
            <person name="Qin X."/>
            <person name="Jiang H."/>
            <person name="Yerrapragada S."/>
            <person name="Mason E.O. Jr."/>
            <person name="Shang Y."/>
            <person name="Williams T.M."/>
            <person name="Fortunov R.M."/>
            <person name="Liu Y."/>
            <person name="Igboeli O."/>
            <person name="Petrosino J."/>
            <person name="Tirumalai M."/>
            <person name="Uzman A."/>
            <person name="Fox G.E."/>
            <person name="Cardenas A.M."/>
            <person name="Muzny D.M."/>
            <person name="Hemphill L."/>
            <person name="Ding Y."/>
            <person name="Dugan S."/>
            <person name="Blyth P.R."/>
            <person name="Buhay C.J."/>
            <person name="Dinh H.H."/>
            <person name="Hawes A.C."/>
            <person name="Holder M."/>
            <person name="Kovar C.L."/>
            <person name="Lee S.L."/>
            <person name="Liu W."/>
            <person name="Nazareth L.V."/>
            <person name="Wang Q."/>
            <person name="Zhou J."/>
            <person name="Kaplan S.L."/>
            <person name="Weinstock G.M."/>
        </authorList>
    </citation>
    <scope>NUCLEOTIDE SEQUENCE [LARGE SCALE GENOMIC DNA]</scope>
    <source>
        <strain>USA300 / TCH1516</strain>
    </source>
</reference>
<protein>
    <recommendedName>
        <fullName evidence="1">Putative N-acetylmannosamine-6-phosphate 2-epimerase</fullName>
        <ecNumber evidence="1">5.1.3.9</ecNumber>
    </recommendedName>
    <alternativeName>
        <fullName evidence="1">ManNAc-6-P epimerase</fullName>
    </alternativeName>
</protein>
<sequence length="222" mass="24545">MLPHGLIVSCQALPDEPLHSSFIMSKMALAAYEGGAVGIRANTKEDILAIKETVDLPVIGIVKRDYDHSDVFITATSKEVDELIESQCEVIALDATLQQRPKETLDELVSYIRTHAPNVEIMADIATVEEAKNAARLGFDYIGTTLHGYTSYTQGQLLYQNDFQFLKDVLQSVDAKVIAEGNVITPDMYKRVMDLGVHCSVVGGAITRPKEITKRFVQIMED</sequence>
<gene>
    <name evidence="1" type="primary">nanE</name>
    <name type="ordered locus">USA300HOU_0338</name>
</gene>